<protein>
    <recommendedName>
        <fullName>Protein FdhE</fullName>
    </recommendedName>
</protein>
<reference key="1">
    <citation type="journal article" date="1991" name="Gene">
        <title>Nucleotide sequence of the fdhE gene involved in respiratory formate dehydrogenase formation in Escherichia coli K-12.</title>
        <authorList>
            <person name="Schlindwein C."/>
            <person name="Mandrand M.-A."/>
        </authorList>
    </citation>
    <scope>NUCLEOTIDE SEQUENCE [GENOMIC DNA]</scope>
    <source>
        <strain>K12</strain>
    </source>
</reference>
<reference key="2">
    <citation type="journal article" date="1993" name="Nucleic Acids Res.">
        <title>Analysis of the Escherichia coli genome. III. DNA sequence of the region from 87.2 to 89.2 minutes.</title>
        <authorList>
            <person name="Plunkett G. III"/>
            <person name="Burland V."/>
            <person name="Daniels D.L."/>
            <person name="Blattner F.R."/>
        </authorList>
    </citation>
    <scope>NUCLEOTIDE SEQUENCE [LARGE SCALE GENOMIC DNA]</scope>
    <source>
        <strain>K12 / MG1655 / ATCC 47076</strain>
    </source>
</reference>
<reference key="3">
    <citation type="journal article" date="1997" name="Science">
        <title>The complete genome sequence of Escherichia coli K-12.</title>
        <authorList>
            <person name="Blattner F.R."/>
            <person name="Plunkett G. III"/>
            <person name="Bloch C.A."/>
            <person name="Perna N.T."/>
            <person name="Burland V."/>
            <person name="Riley M."/>
            <person name="Collado-Vides J."/>
            <person name="Glasner J.D."/>
            <person name="Rode C.K."/>
            <person name="Mayhew G.F."/>
            <person name="Gregor J."/>
            <person name="Davis N.W."/>
            <person name="Kirkpatrick H.A."/>
            <person name="Goeden M.A."/>
            <person name="Rose D.J."/>
            <person name="Mau B."/>
            <person name="Shao Y."/>
        </authorList>
    </citation>
    <scope>NUCLEOTIDE SEQUENCE [LARGE SCALE GENOMIC DNA]</scope>
    <source>
        <strain>K12 / MG1655 / ATCC 47076</strain>
    </source>
</reference>
<reference key="4">
    <citation type="journal article" date="2006" name="Mol. Syst. Biol.">
        <title>Highly accurate genome sequences of Escherichia coli K-12 strains MG1655 and W3110.</title>
        <authorList>
            <person name="Hayashi K."/>
            <person name="Morooka N."/>
            <person name="Yamamoto Y."/>
            <person name="Fujita K."/>
            <person name="Isono K."/>
            <person name="Choi S."/>
            <person name="Ohtsubo E."/>
            <person name="Baba T."/>
            <person name="Wanner B.L."/>
            <person name="Mori H."/>
            <person name="Horiuchi T."/>
        </authorList>
    </citation>
    <scope>NUCLEOTIDE SEQUENCE [LARGE SCALE GENOMIC DNA]</scope>
    <source>
        <strain>K12 / W3110 / ATCC 27325 / DSM 5911</strain>
    </source>
</reference>
<organism>
    <name type="scientific">Escherichia coli (strain K12)</name>
    <dbReference type="NCBI Taxonomy" id="83333"/>
    <lineage>
        <taxon>Bacteria</taxon>
        <taxon>Pseudomonadati</taxon>
        <taxon>Pseudomonadota</taxon>
        <taxon>Gammaproteobacteria</taxon>
        <taxon>Enterobacterales</taxon>
        <taxon>Enterobacteriaceae</taxon>
        <taxon>Escherichia</taxon>
    </lineage>
</organism>
<proteinExistence type="evidence at protein level"/>
<dbReference type="EMBL" id="X16016">
    <property type="protein sequence ID" value="CAA34149.1"/>
    <property type="molecule type" value="Genomic_DNA"/>
</dbReference>
<dbReference type="EMBL" id="L19201">
    <property type="protein sequence ID" value="AAB03024.1"/>
    <property type="molecule type" value="Genomic_DNA"/>
</dbReference>
<dbReference type="EMBL" id="U00096">
    <property type="protein sequence ID" value="AAD13453.1"/>
    <property type="molecule type" value="Genomic_DNA"/>
</dbReference>
<dbReference type="EMBL" id="AP009048">
    <property type="protein sequence ID" value="BAE77418.1"/>
    <property type="molecule type" value="Genomic_DNA"/>
</dbReference>
<dbReference type="PIR" id="S40835">
    <property type="entry name" value="S40835"/>
</dbReference>
<dbReference type="RefSeq" id="NP_418327.1">
    <property type="nucleotide sequence ID" value="NC_000913.3"/>
</dbReference>
<dbReference type="RefSeq" id="WP_000027703.1">
    <property type="nucleotide sequence ID" value="NZ_SSZK01000026.1"/>
</dbReference>
<dbReference type="SMR" id="P13024"/>
<dbReference type="BioGRID" id="4261097">
    <property type="interactions" value="38"/>
</dbReference>
<dbReference type="BioGRID" id="852681">
    <property type="interactions" value="1"/>
</dbReference>
<dbReference type="DIP" id="DIP-9571N"/>
<dbReference type="FunCoup" id="P13024">
    <property type="interactions" value="81"/>
</dbReference>
<dbReference type="IntAct" id="P13024">
    <property type="interactions" value="26"/>
</dbReference>
<dbReference type="MINT" id="P13024"/>
<dbReference type="STRING" id="511145.b3891"/>
<dbReference type="jPOST" id="P13024"/>
<dbReference type="PaxDb" id="511145-b3891"/>
<dbReference type="EnsemblBacteria" id="AAD13453">
    <property type="protein sequence ID" value="AAD13453"/>
    <property type="gene ID" value="b3891"/>
</dbReference>
<dbReference type="GeneID" id="948384"/>
<dbReference type="KEGG" id="ecj:JW3862"/>
<dbReference type="KEGG" id="eco:b3891"/>
<dbReference type="KEGG" id="ecoc:C3026_21035"/>
<dbReference type="PATRIC" id="fig|1411691.4.peg.2818"/>
<dbReference type="EchoBASE" id="EB0280"/>
<dbReference type="eggNOG" id="COG3058">
    <property type="taxonomic scope" value="Bacteria"/>
</dbReference>
<dbReference type="HOGENOM" id="CLU_055275_0_0_6"/>
<dbReference type="InParanoid" id="P13024"/>
<dbReference type="OMA" id="PKNLYQR"/>
<dbReference type="OrthoDB" id="9794151at2"/>
<dbReference type="PhylomeDB" id="P13024"/>
<dbReference type="BioCyc" id="EcoCyc:EG10284-MONOMER"/>
<dbReference type="PRO" id="PR:P13024"/>
<dbReference type="Proteomes" id="UP000000625">
    <property type="component" value="Chromosome"/>
</dbReference>
<dbReference type="GO" id="GO:0005737">
    <property type="term" value="C:cytoplasm"/>
    <property type="evidence" value="ECO:0000314"/>
    <property type="project" value="EcoCyc"/>
</dbReference>
<dbReference type="GO" id="GO:0005829">
    <property type="term" value="C:cytosol"/>
    <property type="evidence" value="ECO:0000314"/>
    <property type="project" value="EcoCyc"/>
</dbReference>
<dbReference type="GO" id="GO:0008199">
    <property type="term" value="F:ferric iron binding"/>
    <property type="evidence" value="ECO:0000314"/>
    <property type="project" value="EcoCyc"/>
</dbReference>
<dbReference type="GO" id="GO:0042803">
    <property type="term" value="F:protein homodimerization activity"/>
    <property type="evidence" value="ECO:0000314"/>
    <property type="project" value="EcoCyc"/>
</dbReference>
<dbReference type="GO" id="GO:0051604">
    <property type="term" value="P:protein maturation"/>
    <property type="evidence" value="ECO:0000315"/>
    <property type="project" value="EcoCyc"/>
</dbReference>
<dbReference type="CDD" id="cd16341">
    <property type="entry name" value="FdhE"/>
    <property type="match status" value="1"/>
</dbReference>
<dbReference type="FunFam" id="3.90.1670.10:FF:000001">
    <property type="entry name" value="Protein FdhE"/>
    <property type="match status" value="1"/>
</dbReference>
<dbReference type="Gene3D" id="3.90.1670.10">
    <property type="entry name" value="FdhE-like domain"/>
    <property type="match status" value="1"/>
</dbReference>
<dbReference type="HAMAP" id="MF_00611">
    <property type="entry name" value="FdeH"/>
    <property type="match status" value="1"/>
</dbReference>
<dbReference type="InterPro" id="IPR024064">
    <property type="entry name" value="FdhE-like_sf"/>
</dbReference>
<dbReference type="InterPro" id="IPR056796">
    <property type="entry name" value="FdhE_C"/>
</dbReference>
<dbReference type="InterPro" id="IPR056797">
    <property type="entry name" value="FdhE_central"/>
</dbReference>
<dbReference type="InterPro" id="IPR056774">
    <property type="entry name" value="FdhE_N"/>
</dbReference>
<dbReference type="InterPro" id="IPR006452">
    <property type="entry name" value="Formate_DH_accessory"/>
</dbReference>
<dbReference type="NCBIfam" id="TIGR01562">
    <property type="entry name" value="FdhE"/>
    <property type="match status" value="1"/>
</dbReference>
<dbReference type="NCBIfam" id="NF002925">
    <property type="entry name" value="PRK03564.1"/>
    <property type="match status" value="1"/>
</dbReference>
<dbReference type="PANTHER" id="PTHR37689">
    <property type="entry name" value="PROTEIN FDHE"/>
    <property type="match status" value="1"/>
</dbReference>
<dbReference type="PANTHER" id="PTHR37689:SF1">
    <property type="entry name" value="PROTEIN FDHE"/>
    <property type="match status" value="1"/>
</dbReference>
<dbReference type="Pfam" id="PF24860">
    <property type="entry name" value="FdhE_C"/>
    <property type="match status" value="1"/>
</dbReference>
<dbReference type="Pfam" id="PF24859">
    <property type="entry name" value="FdhE_central"/>
    <property type="match status" value="1"/>
</dbReference>
<dbReference type="Pfam" id="PF04216">
    <property type="entry name" value="FdhE_N"/>
    <property type="match status" value="1"/>
</dbReference>
<dbReference type="PIRSF" id="PIRSF018296">
    <property type="entry name" value="Format_dh_formtn"/>
    <property type="match status" value="1"/>
</dbReference>
<dbReference type="SUPFAM" id="SSF144020">
    <property type="entry name" value="FdhE-like"/>
    <property type="match status" value="1"/>
</dbReference>
<gene>
    <name type="primary">fdhE</name>
    <name type="ordered locus">b3891</name>
    <name type="ordered locus">JW3862</name>
</gene>
<keyword id="KW-0963">Cytoplasm</keyword>
<keyword id="KW-1185">Reference proteome</keyword>
<name>FDHE_ECOLI</name>
<sequence>MSIRIIPQDELGSSEKRTADMIPPLLFPRLKNLYNRRAERLRELAENNPLGDYLRFAALIAHAQEVVLYDHPLEMDLTARIKEASAQGKPPLDIHVLPRDKHWQKLLMALIAELKPEMSGPALAVIENLEKASTQELEDMASALFASDFSSVSSDKAPFIWAALSLYWAQMANLIPGKARAEYGEQRQYCPVCGSMPVSSMVQIGTTQGLRYLHCNLCETEWHVVRVKCSNCEQSGKLHYWSLDDEQAAIKAESCDDCDTYLKILYQEKDPKIEAVADDLASLVLDARMEQEGYARSSINPFLFPGEGE</sequence>
<accession>P13024</accession>
<accession>Q2M8I8</accession>
<evidence type="ECO:0000305" key="1"/>
<comment type="function">
    <text>Necessary for formate dehydrogenase activity.</text>
</comment>
<comment type="interaction">
    <interactant intactId="EBI-550129">
        <id>P13024</id>
    </interactant>
    <interactant intactId="EBI-550115">
        <id>P24183</id>
        <label>fdnG</label>
    </interactant>
    <organismsDiffer>false</organismsDiffer>
    <experiments>6</experiments>
</comment>
<comment type="interaction">
    <interactant intactId="EBI-550129">
        <id>P13024</id>
    </interactant>
    <interactant intactId="EBI-368676">
        <id>P32176</id>
        <label>fdoG</label>
    </interactant>
    <organismsDiffer>false</organismsDiffer>
    <experiments>4</experiments>
</comment>
<comment type="subcellular location">
    <subcellularLocation>
        <location>Cytoplasm</location>
    </subcellularLocation>
</comment>
<comment type="similarity">
    <text evidence="1">Belongs to the FdhE family.</text>
</comment>
<feature type="chain" id="PRO_0000189638" description="Protein FdhE">
    <location>
        <begin position="1"/>
        <end position="309"/>
    </location>
</feature>
<feature type="sequence conflict" description="In Ref. 1; CAA34149." evidence="1" ref="1">
    <original>A</original>
    <variation>R</variation>
    <location>
        <position position="57"/>
    </location>
</feature>
<feature type="sequence conflict" description="In Ref. 1; CAA34149." evidence="1" ref="1">
    <original>GKARAEYGEQRQYCPVCGSMPVSSMVQIGTTQ</original>
    <variation>AKPALNTASNVNIARFVVLCRCPAWCKLAPLR</variation>
    <location>
        <begin position="177"/>
        <end position="208"/>
    </location>
</feature>
<feature type="sequence conflict" description="In Ref. 1; CAA34149." evidence="1" ref="1">
    <original>Q</original>
    <variation>E</variation>
    <location>
        <position position="291"/>
    </location>
</feature>
<feature type="sequence conflict" description="In Ref. 1; CAA34149." evidence="1" ref="1">
    <original>RSSINPFLFPGEGE</original>
    <variation>AVPSTRSCFRVKESNL</variation>
    <location>
        <begin position="296"/>
        <end position="309"/>
    </location>
</feature>